<gene>
    <name type="primary">GTDC1</name>
    <name evidence="1" type="synonym">QTMAN</name>
    <name evidence="2" type="ORF">RCJMB04_30i19</name>
</gene>
<organism>
    <name type="scientific">Gallus gallus</name>
    <name type="common">Chicken</name>
    <dbReference type="NCBI Taxonomy" id="9031"/>
    <lineage>
        <taxon>Eukaryota</taxon>
        <taxon>Metazoa</taxon>
        <taxon>Chordata</taxon>
        <taxon>Craniata</taxon>
        <taxon>Vertebrata</taxon>
        <taxon>Euteleostomi</taxon>
        <taxon>Archelosauria</taxon>
        <taxon>Archosauria</taxon>
        <taxon>Dinosauria</taxon>
        <taxon>Saurischia</taxon>
        <taxon>Theropoda</taxon>
        <taxon>Coelurosauria</taxon>
        <taxon>Aves</taxon>
        <taxon>Neognathae</taxon>
        <taxon>Galloanserae</taxon>
        <taxon>Galliformes</taxon>
        <taxon>Phasianidae</taxon>
        <taxon>Phasianinae</taxon>
        <taxon>Gallus</taxon>
    </lineage>
</organism>
<comment type="function">
    <text evidence="1">Glycosyltransferase that specifically catalyzes mannosylation of cytoplasmic tRNA(Asp) modified with queuosine at position 34 (queuosine(34)). Mannosylates the cyclopentene moiety of queuosine(34) in tRNA(Asp) to form mannosyl-queuosine(34). Mannosylation of queuosine(34) in tRNA(Asp) is required to slow-down elongation at cognate codons, GAC and GAU, thereby regulating protein translation.</text>
</comment>
<comment type="catalytic activity">
    <reaction evidence="1">
        <text>queuosine(34) in tRNA(Asp) + GDP-alpha-D-mannose = O-4''-alpha-D-mannosylqueuosine(34) in tRNA(Asp) + GDP + H(+)</text>
        <dbReference type="Rhea" id="RHEA:12885"/>
        <dbReference type="Rhea" id="RHEA-COMP:18572"/>
        <dbReference type="Rhea" id="RHEA-COMP:18581"/>
        <dbReference type="ChEBI" id="CHEBI:15378"/>
        <dbReference type="ChEBI" id="CHEBI:57527"/>
        <dbReference type="ChEBI" id="CHEBI:58189"/>
        <dbReference type="ChEBI" id="CHEBI:194431"/>
        <dbReference type="ChEBI" id="CHEBI:194442"/>
        <dbReference type="EC" id="2.4.1.110"/>
    </reaction>
    <physiologicalReaction direction="left-to-right" evidence="1">
        <dbReference type="Rhea" id="RHEA:12886"/>
    </physiologicalReaction>
</comment>
<comment type="subcellular location">
    <subcellularLocation>
        <location evidence="1">Cytoplasm</location>
    </subcellularLocation>
    <subcellularLocation>
        <location evidence="1">Nucleus</location>
    </subcellularLocation>
</comment>
<comment type="similarity">
    <text evidence="3">Belongs to the glycosyltransferase group 1 family. Glycosyltransferase 4 subfamily.</text>
</comment>
<proteinExistence type="evidence at transcript level"/>
<keyword id="KW-0963">Cytoplasm</keyword>
<keyword id="KW-0328">Glycosyltransferase</keyword>
<keyword id="KW-0539">Nucleus</keyword>
<keyword id="KW-1185">Reference proteome</keyword>
<keyword id="KW-0808">Transferase</keyword>
<evidence type="ECO:0000250" key="1">
    <source>
        <dbReference type="UniProtKB" id="Q4AE62"/>
    </source>
</evidence>
<evidence type="ECO:0000303" key="2">
    <source>
    </source>
</evidence>
<evidence type="ECO:0000305" key="3"/>
<accession>Q5ZI40</accession>
<feature type="chain" id="PRO_0000311091" description="tRNA-queuosine alpha-mannosyltransferase">
    <location>
        <begin position="1"/>
        <end position="382"/>
    </location>
</feature>
<sequence>MSVLLIEAFYGGSHKQLMDLLQEELKEECVLCTLPAKKWHWKARTAALYFMQTVPASANYRILFASSVLNLAELAALRPDLGKLKKVLYFHENQLAYPVQKCKERDFQCGYNQVLSCLVADTVVFNSAFNMESFLTSIGKFMKLIPDHRPKDLEKIIRPKCQVLYFPVRFPDVSRFMPEHKLAHLENVIGVKRNGDFYQREGLPGQQKSRALGGLMKNSNACRESGLCETQPGLCTTQHEGLHSPLTAAGRLNKSEASESTNPCQEEDKQHVTFNLCNIWSGMDYLQRPLHVVWPHRWEHDKDPETFFKVLLKLKEQELPFHVSVLGETFTDVPGWKRCIVAVTRCVPRPWCTRRSSQLNICILHLNSFLKGFRISARDQIL</sequence>
<name>QTMAN_CHICK</name>
<dbReference type="EC" id="2.4.1.110" evidence="1"/>
<dbReference type="EMBL" id="AJ720944">
    <property type="protein sequence ID" value="CAG32603.1"/>
    <property type="molecule type" value="mRNA"/>
</dbReference>
<dbReference type="RefSeq" id="NP_001012939.1">
    <property type="nucleotide sequence ID" value="NM_001012921.1"/>
</dbReference>
<dbReference type="FunCoup" id="Q5ZI40">
    <property type="interactions" value="801"/>
</dbReference>
<dbReference type="STRING" id="9031.ENSGALP00000057645"/>
<dbReference type="CAZy" id="GT4">
    <property type="family name" value="Glycosyltransferase Family 4"/>
</dbReference>
<dbReference type="PaxDb" id="9031-ENSGALP00000020279"/>
<dbReference type="KEGG" id="gga:424304"/>
<dbReference type="VEuPathDB" id="HostDB:geneid_424304"/>
<dbReference type="eggNOG" id="ENOG502QQJ3">
    <property type="taxonomic scope" value="Eukaryota"/>
</dbReference>
<dbReference type="InParanoid" id="Q5ZI40"/>
<dbReference type="OrthoDB" id="10032790at2759"/>
<dbReference type="PhylomeDB" id="Q5ZI40"/>
<dbReference type="PRO" id="PR:Q5ZI40"/>
<dbReference type="Proteomes" id="UP000000539">
    <property type="component" value="Unassembled WGS sequence"/>
</dbReference>
<dbReference type="GO" id="GO:0005737">
    <property type="term" value="C:cytoplasm"/>
    <property type="evidence" value="ECO:0000250"/>
    <property type="project" value="UniProtKB"/>
</dbReference>
<dbReference type="GO" id="GO:0005634">
    <property type="term" value="C:nucleus"/>
    <property type="evidence" value="ECO:0000250"/>
    <property type="project" value="UniProtKB"/>
</dbReference>
<dbReference type="GO" id="GO:0016438">
    <property type="term" value="F:tRNA-queuosine(34) beta-mannosyltransferase activity"/>
    <property type="evidence" value="ECO:0000250"/>
    <property type="project" value="UniProtKB"/>
</dbReference>
<dbReference type="GO" id="GO:0006417">
    <property type="term" value="P:regulation of translation"/>
    <property type="evidence" value="ECO:0000250"/>
    <property type="project" value="UniProtKB"/>
</dbReference>
<dbReference type="GO" id="GO:0006400">
    <property type="term" value="P:tRNA modification"/>
    <property type="evidence" value="ECO:0000250"/>
    <property type="project" value="UniProtKB"/>
</dbReference>
<dbReference type="InterPro" id="IPR051862">
    <property type="entry name" value="GT-like_domain_containing_1"/>
</dbReference>
<dbReference type="InterPro" id="IPR022701">
    <property type="entry name" value="QTMAN_N"/>
</dbReference>
<dbReference type="PANTHER" id="PTHR13615">
    <property type="entry name" value="GLYCOSYLTRANSFERASE-LIKE 1"/>
    <property type="match status" value="1"/>
</dbReference>
<dbReference type="PANTHER" id="PTHR13615:SF3">
    <property type="entry name" value="GLYCOSYLTRANSFERASE-LIKE DOMAIN-CONTAINING PROTEIN 1"/>
    <property type="match status" value="1"/>
</dbReference>
<dbReference type="Pfam" id="PF12038">
    <property type="entry name" value="QTMAN_N"/>
    <property type="match status" value="1"/>
</dbReference>
<reference key="1">
    <citation type="journal article" date="2005" name="Genome Biol.">
        <title>Full-length cDNAs from chicken bursal lymphocytes to facilitate gene function analysis.</title>
        <authorList>
            <person name="Caldwell R.B."/>
            <person name="Kierzek A.M."/>
            <person name="Arakawa H."/>
            <person name="Bezzubov Y."/>
            <person name="Zaim J."/>
            <person name="Fiedler P."/>
            <person name="Kutter S."/>
            <person name="Blagodatski A."/>
            <person name="Kostovska D."/>
            <person name="Koter M."/>
            <person name="Plachy J."/>
            <person name="Carninci P."/>
            <person name="Hayashizaki Y."/>
            <person name="Buerstedde J.-M."/>
        </authorList>
    </citation>
    <scope>NUCLEOTIDE SEQUENCE [LARGE SCALE MRNA]</scope>
    <source>
        <strain>CB</strain>
        <tissue>Bursa of Fabricius</tissue>
    </source>
</reference>
<protein>
    <recommendedName>
        <fullName evidence="3">tRNA-queuosine alpha-mannosyltransferase</fullName>
        <shortName evidence="3">QTMAN</shortName>
        <ecNumber evidence="1">2.4.1.110</ecNumber>
    </recommendedName>
    <alternativeName>
        <fullName evidence="3">Glycosyltransferase-like domain-containing protein 1</fullName>
    </alternativeName>
</protein>